<reference key="1">
    <citation type="journal article" date="2002" name="Plant Physiol.">
        <title>Arabidopsis contains nine long-chain acyl-coenzyme A synthetase genes that participate in fatty acid and glycerolipid metabolism.</title>
        <authorList>
            <person name="Shockey J.M."/>
            <person name="Fulda M.S."/>
            <person name="Browse J.A."/>
        </authorList>
    </citation>
    <scope>NUCLEOTIDE SEQUENCE [MRNA]</scope>
    <scope>FUNCTION</scope>
    <scope>CATALYTIC ACTIVITY</scope>
    <scope>TISSUE SPECIFICITY</scope>
    <scope>GENE FAMILY</scope>
</reference>
<reference key="2">
    <citation type="journal article" date="2000" name="Nature">
        <title>Sequence and analysis of chromosome 5 of the plant Arabidopsis thaliana.</title>
        <authorList>
            <person name="Tabata S."/>
            <person name="Kaneko T."/>
            <person name="Nakamura Y."/>
            <person name="Kotani H."/>
            <person name="Kato T."/>
            <person name="Asamizu E."/>
            <person name="Miyajima N."/>
            <person name="Sasamoto S."/>
            <person name="Kimura T."/>
            <person name="Hosouchi T."/>
            <person name="Kawashima K."/>
            <person name="Kohara M."/>
            <person name="Matsumoto M."/>
            <person name="Matsuno A."/>
            <person name="Muraki A."/>
            <person name="Nakayama S."/>
            <person name="Nakazaki N."/>
            <person name="Naruo K."/>
            <person name="Okumura S."/>
            <person name="Shinpo S."/>
            <person name="Takeuchi C."/>
            <person name="Wada T."/>
            <person name="Watanabe A."/>
            <person name="Yamada M."/>
            <person name="Yasuda M."/>
            <person name="Sato S."/>
            <person name="de la Bastide M."/>
            <person name="Huang E."/>
            <person name="Spiegel L."/>
            <person name="Gnoj L."/>
            <person name="O'Shaughnessy A."/>
            <person name="Preston R."/>
            <person name="Habermann K."/>
            <person name="Murray J."/>
            <person name="Johnson D."/>
            <person name="Rohlfing T."/>
            <person name="Nelson J."/>
            <person name="Stoneking T."/>
            <person name="Pepin K."/>
            <person name="Spieth J."/>
            <person name="Sekhon M."/>
            <person name="Armstrong J."/>
            <person name="Becker M."/>
            <person name="Belter E."/>
            <person name="Cordum H."/>
            <person name="Cordes M."/>
            <person name="Courtney L."/>
            <person name="Courtney W."/>
            <person name="Dante M."/>
            <person name="Du H."/>
            <person name="Edwards J."/>
            <person name="Fryman J."/>
            <person name="Haakensen B."/>
            <person name="Lamar E."/>
            <person name="Latreille P."/>
            <person name="Leonard S."/>
            <person name="Meyer R."/>
            <person name="Mulvaney E."/>
            <person name="Ozersky P."/>
            <person name="Riley A."/>
            <person name="Strowmatt C."/>
            <person name="Wagner-McPherson C."/>
            <person name="Wollam A."/>
            <person name="Yoakum M."/>
            <person name="Bell M."/>
            <person name="Dedhia N."/>
            <person name="Parnell L."/>
            <person name="Shah R."/>
            <person name="Rodriguez M."/>
            <person name="Hoon See L."/>
            <person name="Vil D."/>
            <person name="Baker J."/>
            <person name="Kirchoff K."/>
            <person name="Toth K."/>
            <person name="King L."/>
            <person name="Bahret A."/>
            <person name="Miller B."/>
            <person name="Marra M.A."/>
            <person name="Martienssen R."/>
            <person name="McCombie W.R."/>
            <person name="Wilson R.K."/>
            <person name="Murphy G."/>
            <person name="Bancroft I."/>
            <person name="Volckaert G."/>
            <person name="Wambutt R."/>
            <person name="Duesterhoeft A."/>
            <person name="Stiekema W."/>
            <person name="Pohl T."/>
            <person name="Entian K.-D."/>
            <person name="Terryn N."/>
            <person name="Hartley N."/>
            <person name="Bent E."/>
            <person name="Johnson S."/>
            <person name="Langham S.-A."/>
            <person name="McCullagh B."/>
            <person name="Robben J."/>
            <person name="Grymonprez B."/>
            <person name="Zimmermann W."/>
            <person name="Ramsperger U."/>
            <person name="Wedler H."/>
            <person name="Balke K."/>
            <person name="Wedler E."/>
            <person name="Peters S."/>
            <person name="van Staveren M."/>
            <person name="Dirkse W."/>
            <person name="Mooijman P."/>
            <person name="Klein Lankhorst R."/>
            <person name="Weitzenegger T."/>
            <person name="Bothe G."/>
            <person name="Rose M."/>
            <person name="Hauf J."/>
            <person name="Berneiser S."/>
            <person name="Hempel S."/>
            <person name="Feldpausch M."/>
            <person name="Lamberth S."/>
            <person name="Villarroel R."/>
            <person name="Gielen J."/>
            <person name="Ardiles W."/>
            <person name="Bents O."/>
            <person name="Lemcke K."/>
            <person name="Kolesov G."/>
            <person name="Mayer K.F.X."/>
            <person name="Rudd S."/>
            <person name="Schoof H."/>
            <person name="Schueller C."/>
            <person name="Zaccaria P."/>
            <person name="Mewes H.-W."/>
            <person name="Bevan M."/>
            <person name="Fransz P.F."/>
        </authorList>
    </citation>
    <scope>NUCLEOTIDE SEQUENCE [LARGE SCALE GENOMIC DNA]</scope>
    <source>
        <strain>cv. Columbia</strain>
    </source>
</reference>
<reference key="3">
    <citation type="journal article" date="2017" name="Plant J.">
        <title>Araport11: a complete reannotation of the Arabidopsis thaliana reference genome.</title>
        <authorList>
            <person name="Cheng C.Y."/>
            <person name="Krishnakumar V."/>
            <person name="Chan A.P."/>
            <person name="Thibaud-Nissen F."/>
            <person name="Schobel S."/>
            <person name="Town C.D."/>
        </authorList>
    </citation>
    <scope>GENOME REANNOTATION</scope>
    <source>
        <strain>cv. Columbia</strain>
    </source>
</reference>
<reference key="4">
    <citation type="journal article" date="2002" name="Science">
        <title>Functional annotation of a full-length Arabidopsis cDNA collection.</title>
        <authorList>
            <person name="Seki M."/>
            <person name="Narusaka M."/>
            <person name="Kamiya A."/>
            <person name="Ishida J."/>
            <person name="Satou M."/>
            <person name="Sakurai T."/>
            <person name="Nakajima M."/>
            <person name="Enju A."/>
            <person name="Akiyama K."/>
            <person name="Oono Y."/>
            <person name="Muramatsu M."/>
            <person name="Hayashizaki Y."/>
            <person name="Kawai J."/>
            <person name="Carninci P."/>
            <person name="Itoh M."/>
            <person name="Ishii Y."/>
            <person name="Arakawa T."/>
            <person name="Shibata K."/>
            <person name="Shinagawa A."/>
            <person name="Shinozaki K."/>
        </authorList>
    </citation>
    <scope>NUCLEOTIDE SEQUENCE [LARGE SCALE MRNA] OF 604-700</scope>
    <source>
        <strain>cv. Columbia</strain>
    </source>
</reference>
<reference key="5">
    <citation type="journal article" date="2002" name="Plant J.">
        <title>Two long-chain acyl-CoA synthetases from Arabidopsis thaliana involved in peroxisomal fatty acid beta-oxidation.</title>
        <authorList>
            <person name="Fulda M."/>
            <person name="Shockey J."/>
            <person name="Werber M."/>
            <person name="Wolter F.P."/>
            <person name="Heinz E."/>
        </authorList>
    </citation>
    <scope>FUNCTION</scope>
    <scope>CATALYTIC ACTIVITY</scope>
    <scope>DEVELOPMENTAL STAGE</scope>
    <scope>SUBCELLULAR LOCATION</scope>
</reference>
<reference key="6">
    <citation type="journal article" date="2003" name="Plant Physiol.">
        <title>Arabidopsis contains a large superfamily of acyl-activating enzymes. Phylogenetic and biochemical analysis reveals a new class of acyl-coenzyme a synthetases.</title>
        <authorList>
            <person name="Shockey J.M."/>
            <person name="Fulda M.S."/>
            <person name="Browse J."/>
        </authorList>
    </citation>
    <scope>GENE FAMILY ORGANIZATION</scope>
</reference>
<reference key="7">
    <citation type="journal article" date="2004" name="Plant Cell">
        <title>Peroxisomal Acyl-CoA synthetase activity is essential for seedling development in Arabidopsis thaliana.</title>
        <authorList>
            <person name="Fulda M."/>
            <person name="Schnurr J."/>
            <person name="Abbadi A."/>
            <person name="Heinz E."/>
            <person name="Browse J."/>
        </authorList>
    </citation>
    <scope>FUNCTION</scope>
    <scope>DISRUPTION PHENOTYPE</scope>
</reference>
<reference key="8">
    <citation type="journal article" date="2005" name="Arch. Biochem. Biophys.">
        <title>AtLACS7 interacts with the TPR domains of the PTS1 receptor PEX5.</title>
        <authorList>
            <person name="Bonsegna S."/>
            <person name="Slocombe S.P."/>
            <person name="De Bellis L."/>
            <person name="Baker A."/>
        </authorList>
    </citation>
    <scope>INTERACTION WITH PEX5</scope>
    <scope>TISSUE SPECIFICITY</scope>
    <scope>INDUCTION</scope>
</reference>
<reference key="9">
    <citation type="journal article" date="2006" name="J. Exp. Bot.">
        <title>Analysis of the role of COMATOSE and peroxisomal beta-oxidation in the determination of germination potential in Arabidopsis.</title>
        <authorList>
            <person name="Footitt S."/>
            <person name="Marquez J."/>
            <person name="Schmuths H."/>
            <person name="Baker A."/>
            <person name="Theodoulou F.L."/>
            <person name="Holdsworth M."/>
        </authorList>
    </citation>
    <scope>FUNCTION</scope>
</reference>
<reference key="10">
    <citation type="journal article" date="2007" name="Mol. Cell. Proteomics">
        <title>Multidimensional protein identification technology (MudPIT) analysis of ubiquitinated proteins in plants.</title>
        <authorList>
            <person name="Maor R."/>
            <person name="Jones A."/>
            <person name="Nuehse T.S."/>
            <person name="Studholme D.J."/>
            <person name="Peck S.C."/>
            <person name="Shirasu K."/>
        </authorList>
    </citation>
    <scope>IDENTIFICATION BY MASS SPECTROMETRY [LARGE SCALE ANALYSIS]</scope>
    <source>
        <strain>cv. Landsberg erecta</strain>
    </source>
</reference>
<protein>
    <recommendedName>
        <fullName evidence="9">Long chain acyl-CoA synthetase 7, peroxisomal</fullName>
        <shortName evidence="10">AtLACS7</shortName>
        <ecNumber evidence="4 5">6.2.1.3</ecNumber>
    </recommendedName>
</protein>
<dbReference type="EC" id="6.2.1.3" evidence="4 5"/>
<dbReference type="EMBL" id="AF503757">
    <property type="protein sequence ID" value="AAM28874.1"/>
    <property type="molecule type" value="mRNA"/>
</dbReference>
<dbReference type="EMBL" id="AC007478">
    <property type="status" value="NOT_ANNOTATED_CDS"/>
    <property type="molecule type" value="Genomic_DNA"/>
</dbReference>
<dbReference type="EMBL" id="CP002688">
    <property type="protein sequence ID" value="AED93704.1"/>
    <property type="molecule type" value="Genomic_DNA"/>
</dbReference>
<dbReference type="EMBL" id="AK118614">
    <property type="protein sequence ID" value="BAC43213.1"/>
    <property type="status" value="ALT_INIT"/>
    <property type="molecule type" value="mRNA"/>
</dbReference>
<dbReference type="RefSeq" id="NP_198112.2">
    <property type="nucleotide sequence ID" value="NM_122642.5"/>
</dbReference>
<dbReference type="SMR" id="Q8LKS5"/>
<dbReference type="BioGRID" id="18094">
    <property type="interactions" value="2"/>
</dbReference>
<dbReference type="FunCoup" id="Q8LKS5">
    <property type="interactions" value="1829"/>
</dbReference>
<dbReference type="IntAct" id="Q8LKS5">
    <property type="interactions" value="1"/>
</dbReference>
<dbReference type="STRING" id="3702.Q8LKS5"/>
<dbReference type="SwissLipids" id="SLP:000001940"/>
<dbReference type="PaxDb" id="3702-AT5G27600.1"/>
<dbReference type="ProteomicsDB" id="237056"/>
<dbReference type="EnsemblPlants" id="AT5G27600.1">
    <property type="protein sequence ID" value="AT5G27600.1"/>
    <property type="gene ID" value="AT5G27600"/>
</dbReference>
<dbReference type="GeneID" id="832820"/>
<dbReference type="Gramene" id="AT5G27600.1">
    <property type="protein sequence ID" value="AT5G27600.1"/>
    <property type="gene ID" value="AT5G27600"/>
</dbReference>
<dbReference type="KEGG" id="ath:AT5G27600"/>
<dbReference type="Araport" id="AT5G27600"/>
<dbReference type="TAIR" id="AT5G27600">
    <property type="gene designation" value="LACS7"/>
</dbReference>
<dbReference type="eggNOG" id="KOG1256">
    <property type="taxonomic scope" value="Eukaryota"/>
</dbReference>
<dbReference type="HOGENOM" id="CLU_000022_45_4_1"/>
<dbReference type="InParanoid" id="Q8LKS5"/>
<dbReference type="OMA" id="SHVYGLM"/>
<dbReference type="PhylomeDB" id="Q8LKS5"/>
<dbReference type="BioCyc" id="ARA:AT5G27600-MONOMER"/>
<dbReference type="BioCyc" id="MetaCyc:AT5G27600-MONOMER"/>
<dbReference type="UniPathway" id="UPA00199"/>
<dbReference type="CD-CODE" id="4299E36E">
    <property type="entry name" value="Nucleolus"/>
</dbReference>
<dbReference type="PRO" id="PR:Q8LKS5"/>
<dbReference type="Proteomes" id="UP000006548">
    <property type="component" value="Chromosome 5"/>
</dbReference>
<dbReference type="ExpressionAtlas" id="Q8LKS5">
    <property type="expression patterns" value="baseline and differential"/>
</dbReference>
<dbReference type="GO" id="GO:0005777">
    <property type="term" value="C:peroxisome"/>
    <property type="evidence" value="ECO:0000314"/>
    <property type="project" value="UniProtKB"/>
</dbReference>
<dbReference type="GO" id="GO:0009536">
    <property type="term" value="C:plastid"/>
    <property type="evidence" value="ECO:0007005"/>
    <property type="project" value="TAIR"/>
</dbReference>
<dbReference type="GO" id="GO:0005524">
    <property type="term" value="F:ATP binding"/>
    <property type="evidence" value="ECO:0007669"/>
    <property type="project" value="UniProtKB-KW"/>
</dbReference>
<dbReference type="GO" id="GO:0102391">
    <property type="term" value="F:decanoate-CoA ligase activity"/>
    <property type="evidence" value="ECO:0007669"/>
    <property type="project" value="RHEA"/>
</dbReference>
<dbReference type="GO" id="GO:0004467">
    <property type="term" value="F:long-chain fatty acid-CoA ligase activity"/>
    <property type="evidence" value="ECO:0000314"/>
    <property type="project" value="UniProtKB"/>
</dbReference>
<dbReference type="GO" id="GO:0006631">
    <property type="term" value="P:fatty acid metabolic process"/>
    <property type="evidence" value="ECO:0000304"/>
    <property type="project" value="UniProtKB"/>
</dbReference>
<dbReference type="GO" id="GO:0010193">
    <property type="term" value="P:response to ozone"/>
    <property type="evidence" value="ECO:0000270"/>
    <property type="project" value="TAIR"/>
</dbReference>
<dbReference type="GO" id="GO:0009651">
    <property type="term" value="P:response to salt stress"/>
    <property type="evidence" value="ECO:0000270"/>
    <property type="project" value="TAIR"/>
</dbReference>
<dbReference type="CDD" id="cd05927">
    <property type="entry name" value="LC-FACS_euk"/>
    <property type="match status" value="1"/>
</dbReference>
<dbReference type="Gene3D" id="3.40.50.12780">
    <property type="entry name" value="N-terminal domain of ligase-like"/>
    <property type="match status" value="1"/>
</dbReference>
<dbReference type="InterPro" id="IPR020845">
    <property type="entry name" value="AMP-binding_CS"/>
</dbReference>
<dbReference type="InterPro" id="IPR000873">
    <property type="entry name" value="AMP-dep_synth/lig_dom"/>
</dbReference>
<dbReference type="InterPro" id="IPR042099">
    <property type="entry name" value="ANL_N_sf"/>
</dbReference>
<dbReference type="InterPro" id="IPR045311">
    <property type="entry name" value="LC-FACS_euk"/>
</dbReference>
<dbReference type="PANTHER" id="PTHR43272:SF90">
    <property type="entry name" value="LONG CHAIN ACYL-COA SYNTHETASE 7, PEROXISOMAL"/>
    <property type="match status" value="1"/>
</dbReference>
<dbReference type="PANTHER" id="PTHR43272">
    <property type="entry name" value="LONG-CHAIN-FATTY-ACID--COA LIGASE"/>
    <property type="match status" value="1"/>
</dbReference>
<dbReference type="Pfam" id="PF00501">
    <property type="entry name" value="AMP-binding"/>
    <property type="match status" value="1"/>
</dbReference>
<dbReference type="SUPFAM" id="SSF56801">
    <property type="entry name" value="Acetyl-CoA synthetase-like"/>
    <property type="match status" value="1"/>
</dbReference>
<dbReference type="PROSITE" id="PS00455">
    <property type="entry name" value="AMP_BINDING"/>
    <property type="match status" value="1"/>
</dbReference>
<accession>Q8LKS5</accession>
<accession>Q8GWV4</accession>
<sequence length="700" mass="77353">MEFASPEQRRLETIRSHIDTSPTNDQSSSLFLNATASSASPFFKEDSYSVVLPEKLDTGKWNVYRSKRSPTKLVSRFPDHPEIGTLHDNFVHAVETYAENKYLGTRVRSDGTIGEYSWMTYGEAASERQAIGSGLLFHGVNQGDCVGLYFINRPEWLVVDHACAAYSFVSVPLYDTLGPDAVKFVVNHANLQAIFCVPQTLNILLSFLAEIPSIRLIVVVGGADEHLPSLPRGTGVTIVSYQKLLSQGRSSLHPFSPPKPEDIATICYTSGTTGTPKGVVLTHGNLIANVAGSSVEAEFFPSDVYISYLPLAHIYERANQIMGVYGGVAVGFYQGDVFKLMDDFAVLRPTIFCSVPRLYNRIYDGITSAVKSSGVVKKRLFEIAYNSKKQAIINGRTPSAFWDKLVFNKIKEKLGGRVRFMGSGASPLSPDVMDFLRICFGCSVREGYGMTETSCVISAMDDGDNLSGHVGSPNPACEVKLVDVPEMNYTSDDQPYPRGEICVRGPIIFKGYYKDEEQTREILDGDGWLHTGDIGLWLPGGRLKIIDRKKNIFKLAQGEYIAPEKIENVYTKCRFVSQCFIHGDSFNSSLVAIVSVDPEVMKDWAASEGIKYEHLGQLCNDPRVRKTVLAEMDDLGREAQLRGFEFAKAVTLVPEPFTLENGLLTPTFKIKRPQAKAYFAEAISKMYAEIAASNPIPSKL</sequence>
<organism>
    <name type="scientific">Arabidopsis thaliana</name>
    <name type="common">Mouse-ear cress</name>
    <dbReference type="NCBI Taxonomy" id="3702"/>
    <lineage>
        <taxon>Eukaryota</taxon>
        <taxon>Viridiplantae</taxon>
        <taxon>Streptophyta</taxon>
        <taxon>Embryophyta</taxon>
        <taxon>Tracheophyta</taxon>
        <taxon>Spermatophyta</taxon>
        <taxon>Magnoliopsida</taxon>
        <taxon>eudicotyledons</taxon>
        <taxon>Gunneridae</taxon>
        <taxon>Pentapetalae</taxon>
        <taxon>rosids</taxon>
        <taxon>malvids</taxon>
        <taxon>Brassicales</taxon>
        <taxon>Brassicaceae</taxon>
        <taxon>Camelineae</taxon>
        <taxon>Arabidopsis</taxon>
    </lineage>
</organism>
<feature type="chain" id="PRO_0000401416" description="Long chain acyl-CoA synthetase 7, peroxisomal">
    <location>
        <begin position="1"/>
        <end position="700"/>
    </location>
</feature>
<feature type="region of interest" description="Disordered" evidence="3">
    <location>
        <begin position="1"/>
        <end position="29"/>
    </location>
</feature>
<feature type="region of interest" description="Fatty acid-binding" evidence="2">
    <location>
        <begin position="526"/>
        <end position="550"/>
    </location>
</feature>
<feature type="short sequence motif" description="Microbody targeting signal" evidence="2">
    <location>
        <begin position="10"/>
        <end position="18"/>
    </location>
</feature>
<feature type="short sequence motif" description="Microbody targeting signal" evidence="2">
    <location>
        <begin position="698"/>
        <end position="700"/>
    </location>
</feature>
<feature type="compositionally biased region" description="Basic and acidic residues" evidence="3">
    <location>
        <begin position="7"/>
        <end position="18"/>
    </location>
</feature>
<feature type="compositionally biased region" description="Polar residues" evidence="3">
    <location>
        <begin position="19"/>
        <end position="29"/>
    </location>
</feature>
<feature type="binding site" evidence="2">
    <location>
        <begin position="266"/>
        <end position="277"/>
    </location>
    <ligand>
        <name>ATP</name>
        <dbReference type="ChEBI" id="CHEBI:30616"/>
    </ligand>
</feature>
<feature type="sequence conflict" description="In Ref. 1; AAM28874." evidence="11" ref="1">
    <original>F</original>
    <variation>L</variation>
    <location>
        <position position="657"/>
    </location>
</feature>
<gene>
    <name evidence="9" type="primary">LACS7</name>
    <name evidence="15" type="ordered locus">At5g27600</name>
    <name evidence="14" type="ORF">F15A18.60</name>
</gene>
<keyword id="KW-0067">ATP-binding</keyword>
<keyword id="KW-0276">Fatty acid metabolism</keyword>
<keyword id="KW-0436">Ligase</keyword>
<keyword id="KW-0443">Lipid metabolism</keyword>
<keyword id="KW-0460">Magnesium</keyword>
<keyword id="KW-0547">Nucleotide-binding</keyword>
<keyword id="KW-0576">Peroxisome</keyword>
<keyword id="KW-1185">Reference proteome</keyword>
<name>LACS7_ARATH</name>
<proteinExistence type="evidence at protein level"/>
<evidence type="ECO:0000250" key="1">
    <source>
        <dbReference type="UniProtKB" id="P69451"/>
    </source>
</evidence>
<evidence type="ECO:0000255" key="2"/>
<evidence type="ECO:0000256" key="3">
    <source>
        <dbReference type="SAM" id="MobiDB-lite"/>
    </source>
</evidence>
<evidence type="ECO:0000269" key="4">
    <source>
    </source>
</evidence>
<evidence type="ECO:0000269" key="5">
    <source>
    </source>
</evidence>
<evidence type="ECO:0000269" key="6">
    <source>
    </source>
</evidence>
<evidence type="ECO:0000269" key="7">
    <source>
    </source>
</evidence>
<evidence type="ECO:0000269" key="8">
    <source>
    </source>
</evidence>
<evidence type="ECO:0000303" key="9">
    <source>
    </source>
</evidence>
<evidence type="ECO:0000303" key="10">
    <source>
    </source>
</evidence>
<evidence type="ECO:0000305" key="11"/>
<evidence type="ECO:0000305" key="12">
    <source>
    </source>
</evidence>
<evidence type="ECO:0000305" key="13">
    <source>
    </source>
</evidence>
<evidence type="ECO:0000312" key="14">
    <source>
        <dbReference type="EMBL" id="AC007478"/>
    </source>
</evidence>
<evidence type="ECO:0000312" key="15">
    <source>
        <dbReference type="EMBL" id="AED93704.1"/>
    </source>
</evidence>
<comment type="function">
    <text evidence="4 5 6 8 12 13">Activation of long-chain fatty acids for both synthesis of cellular lipids, and degradation via beta-oxidation (Probable). Preferentially uses palmitate, palmitoleate, oleate, linoleate and eicosenoate as substrates (PubMed:12177484, PubMed:12366803). Can use myristate and linolenate as substrates (PubMed:12366803). Functions redundantly with LACS6 in lipid mobilization for beta-oxidation during seed germination, which is essential for postgerminative growth and seedling establishment (PubMed:14742880, PubMed:16844736).</text>
</comment>
<comment type="catalytic activity">
    <reaction evidence="4 5">
        <text>a long-chain fatty acid + ATP + CoA = a long-chain fatty acyl-CoA + AMP + diphosphate</text>
        <dbReference type="Rhea" id="RHEA:15421"/>
        <dbReference type="ChEBI" id="CHEBI:30616"/>
        <dbReference type="ChEBI" id="CHEBI:33019"/>
        <dbReference type="ChEBI" id="CHEBI:57287"/>
        <dbReference type="ChEBI" id="CHEBI:57560"/>
        <dbReference type="ChEBI" id="CHEBI:83139"/>
        <dbReference type="ChEBI" id="CHEBI:456215"/>
        <dbReference type="EC" id="6.2.1.3"/>
    </reaction>
    <physiologicalReaction direction="left-to-right" evidence="4 5">
        <dbReference type="Rhea" id="RHEA:15422"/>
    </physiologicalReaction>
</comment>
<comment type="catalytic activity">
    <reaction evidence="5">
        <text>decanoate + ATP + CoA = decanoyl-CoA + AMP + diphosphate</text>
        <dbReference type="Rhea" id="RHEA:33627"/>
        <dbReference type="ChEBI" id="CHEBI:27689"/>
        <dbReference type="ChEBI" id="CHEBI:30616"/>
        <dbReference type="ChEBI" id="CHEBI:33019"/>
        <dbReference type="ChEBI" id="CHEBI:57287"/>
        <dbReference type="ChEBI" id="CHEBI:61430"/>
        <dbReference type="ChEBI" id="CHEBI:456215"/>
    </reaction>
    <physiologicalReaction direction="left-to-right" evidence="5">
        <dbReference type="Rhea" id="RHEA:33628"/>
    </physiologicalReaction>
</comment>
<comment type="catalytic activity">
    <reaction evidence="5">
        <text>dodecanoate + ATP + CoA = dodecanoyl-CoA + AMP + diphosphate</text>
        <dbReference type="Rhea" id="RHEA:33623"/>
        <dbReference type="ChEBI" id="CHEBI:18262"/>
        <dbReference type="ChEBI" id="CHEBI:30616"/>
        <dbReference type="ChEBI" id="CHEBI:33019"/>
        <dbReference type="ChEBI" id="CHEBI:57287"/>
        <dbReference type="ChEBI" id="CHEBI:57375"/>
        <dbReference type="ChEBI" id="CHEBI:456215"/>
    </reaction>
    <physiologicalReaction direction="left-to-right" evidence="5">
        <dbReference type="Rhea" id="RHEA:33624"/>
    </physiologicalReaction>
</comment>
<comment type="catalytic activity">
    <reaction evidence="5">
        <text>tetradecanoate + ATP + CoA = tetradecanoyl-CoA + AMP + diphosphate</text>
        <dbReference type="Rhea" id="RHEA:33619"/>
        <dbReference type="ChEBI" id="CHEBI:30616"/>
        <dbReference type="ChEBI" id="CHEBI:30807"/>
        <dbReference type="ChEBI" id="CHEBI:33019"/>
        <dbReference type="ChEBI" id="CHEBI:57287"/>
        <dbReference type="ChEBI" id="CHEBI:57385"/>
        <dbReference type="ChEBI" id="CHEBI:456215"/>
    </reaction>
    <physiologicalReaction direction="left-to-right" evidence="5">
        <dbReference type="Rhea" id="RHEA:33620"/>
    </physiologicalReaction>
</comment>
<comment type="catalytic activity">
    <reaction evidence="5">
        <text>hexadecanoate + ATP + CoA = hexadecanoyl-CoA + AMP + diphosphate</text>
        <dbReference type="Rhea" id="RHEA:30751"/>
        <dbReference type="ChEBI" id="CHEBI:7896"/>
        <dbReference type="ChEBI" id="CHEBI:30616"/>
        <dbReference type="ChEBI" id="CHEBI:33019"/>
        <dbReference type="ChEBI" id="CHEBI:57287"/>
        <dbReference type="ChEBI" id="CHEBI:57379"/>
        <dbReference type="ChEBI" id="CHEBI:456215"/>
    </reaction>
    <physiologicalReaction direction="left-to-right" evidence="5">
        <dbReference type="Rhea" id="RHEA:30752"/>
    </physiologicalReaction>
</comment>
<comment type="catalytic activity">
    <reaction evidence="5">
        <text>(9Z)-octadecenoate + ATP + CoA = (9Z)-octadecenoyl-CoA + AMP + diphosphate</text>
        <dbReference type="Rhea" id="RHEA:33607"/>
        <dbReference type="ChEBI" id="CHEBI:30616"/>
        <dbReference type="ChEBI" id="CHEBI:30823"/>
        <dbReference type="ChEBI" id="CHEBI:33019"/>
        <dbReference type="ChEBI" id="CHEBI:57287"/>
        <dbReference type="ChEBI" id="CHEBI:57387"/>
        <dbReference type="ChEBI" id="CHEBI:456215"/>
    </reaction>
    <physiologicalReaction direction="left-to-right" evidence="5">
        <dbReference type="Rhea" id="RHEA:33608"/>
    </physiologicalReaction>
</comment>
<comment type="catalytic activity">
    <reaction evidence="5">
        <text>(9Z,12Z)-octadecadienoate + ATP + CoA = (9Z,12Z)-octadecadienoyl-CoA + AMP + diphosphate</text>
        <dbReference type="Rhea" id="RHEA:33651"/>
        <dbReference type="ChEBI" id="CHEBI:30245"/>
        <dbReference type="ChEBI" id="CHEBI:30616"/>
        <dbReference type="ChEBI" id="CHEBI:33019"/>
        <dbReference type="ChEBI" id="CHEBI:57287"/>
        <dbReference type="ChEBI" id="CHEBI:57383"/>
        <dbReference type="ChEBI" id="CHEBI:456215"/>
    </reaction>
    <physiologicalReaction direction="left-to-right" evidence="5">
        <dbReference type="Rhea" id="RHEA:33652"/>
    </physiologicalReaction>
</comment>
<comment type="catalytic activity">
    <reaction evidence="5">
        <text>(9Z,12Z,15Z)-octadecatrienoate + ATP + CoA = (9Z,12Z,15Z)-octadecatrienoyl-CoA + AMP + diphosphate</text>
        <dbReference type="Rhea" id="RHEA:44936"/>
        <dbReference type="ChEBI" id="CHEBI:30616"/>
        <dbReference type="ChEBI" id="CHEBI:32387"/>
        <dbReference type="ChEBI" id="CHEBI:33019"/>
        <dbReference type="ChEBI" id="CHEBI:57287"/>
        <dbReference type="ChEBI" id="CHEBI:74034"/>
        <dbReference type="ChEBI" id="CHEBI:456215"/>
    </reaction>
    <physiologicalReaction direction="left-to-right" evidence="5">
        <dbReference type="Rhea" id="RHEA:44937"/>
    </physiologicalReaction>
</comment>
<comment type="cofactor">
    <cofactor evidence="1">
        <name>Mg(2+)</name>
        <dbReference type="ChEBI" id="CHEBI:18420"/>
    </cofactor>
</comment>
<comment type="pathway">
    <text evidence="11">Lipid metabolism; fatty acid metabolism.</text>
</comment>
<comment type="subunit">
    <text evidence="7">Interacts with PEX5.</text>
</comment>
<comment type="interaction">
    <interactant intactId="EBI-993851">
        <id>Q8LKS5</id>
    </interactant>
    <interactant intactId="EBI-993861">
        <id>Q9FMA3</id>
        <label>PEX5</label>
    </interactant>
    <organismsDiffer>false</organismsDiffer>
    <experiments>4</experiments>
</comment>
<comment type="subcellular location">
    <subcellularLocation>
        <location evidence="5">Peroxisome</location>
    </subcellularLocation>
</comment>
<comment type="tissue specificity">
    <text evidence="4 7">Expressed in roots, stems, leaves flowers and germinating seedling (PubMed:12177484). Preferentially expressed in seeds.</text>
</comment>
<comment type="developmental stage">
    <text evidence="5">Induced during seed germination.</text>
</comment>
<comment type="induction">
    <text evidence="7">Up-regulated by ozone and salt stress.</text>
</comment>
<comment type="disruption phenotype">
    <text evidence="6">Seedlings of the lacs6 and lacs7 double mutant were arrested in postgerminative growth due to inability to mobilize fatty acids for beta-oxidation, a necessary process to pursue the development.</text>
</comment>
<comment type="similarity">
    <text evidence="11">Belongs to the ATP-dependent AMP-binding enzyme family.</text>
</comment>
<comment type="sequence caution" evidence="11">
    <conflict type="erroneous initiation">
        <sequence resource="EMBL-CDS" id="BAC43213"/>
    </conflict>
    <text>Truncated N-terminus.</text>
</comment>